<sequence>MKQYLELMRHVRDNGVRKEDRTGTGTVSVFGYQMRFDLSQGFPLVTTKKCHLKSIIHELLWFLNGETNIAYLNNNGVKIWDAWATESGDLGPIYGAQWRSWPAQNGETLDQISQLIEQIKHKPDSRRLIISAWNPALLPDESISPQDNVRNGKMALPPCHTLFQFYVLEGRLSCQLYQRSADIFLGVPFNIASYALLTMMIAQVTGLAPGDFVHTFGDAHLYLNHLEQVDTQLQRQPLPLPTMAINPAVKDIFGFCFDDFELQNYQAHPHIAAPISV</sequence>
<gene>
    <name evidence="1" type="primary">thyA</name>
    <name type="ordered locus">TERTU_0365</name>
</gene>
<feature type="chain" id="PRO_1000201725" description="Thymidylate synthase">
    <location>
        <begin position="1"/>
        <end position="277"/>
    </location>
</feature>
<feature type="active site" description="Nucleophile" evidence="1">
    <location>
        <position position="159"/>
    </location>
</feature>
<feature type="binding site" description="in other chain" evidence="1">
    <location>
        <position position="21"/>
    </location>
    <ligand>
        <name>dUMP</name>
        <dbReference type="ChEBI" id="CHEBI:246422"/>
        <note>ligand shared between dimeric partners</note>
    </ligand>
</feature>
<feature type="binding site" evidence="1">
    <location>
        <position position="51"/>
    </location>
    <ligand>
        <name>(6R)-5,10-methylene-5,6,7,8-tetrahydrofolate</name>
        <dbReference type="ChEBI" id="CHEBI:15636"/>
    </ligand>
</feature>
<feature type="binding site" evidence="1">
    <location>
        <begin position="126"/>
        <end position="127"/>
    </location>
    <ligand>
        <name>dUMP</name>
        <dbReference type="ChEBI" id="CHEBI:246422"/>
        <note>ligand shared between dimeric partners</note>
    </ligand>
</feature>
<feature type="binding site" description="in other chain" evidence="1">
    <location>
        <begin position="179"/>
        <end position="182"/>
    </location>
    <ligand>
        <name>dUMP</name>
        <dbReference type="ChEBI" id="CHEBI:246422"/>
        <note>ligand shared between dimeric partners</note>
    </ligand>
</feature>
<feature type="binding site" evidence="1">
    <location>
        <position position="182"/>
    </location>
    <ligand>
        <name>(6R)-5,10-methylene-5,6,7,8-tetrahydrofolate</name>
        <dbReference type="ChEBI" id="CHEBI:15636"/>
    </ligand>
</feature>
<feature type="binding site" description="in other chain" evidence="1">
    <location>
        <position position="190"/>
    </location>
    <ligand>
        <name>dUMP</name>
        <dbReference type="ChEBI" id="CHEBI:246422"/>
        <note>ligand shared between dimeric partners</note>
    </ligand>
</feature>
<feature type="binding site" description="in other chain" evidence="1">
    <location>
        <begin position="220"/>
        <end position="222"/>
    </location>
    <ligand>
        <name>dUMP</name>
        <dbReference type="ChEBI" id="CHEBI:246422"/>
        <note>ligand shared between dimeric partners</note>
    </ligand>
</feature>
<feature type="binding site" evidence="1">
    <location>
        <position position="276"/>
    </location>
    <ligand>
        <name>(6R)-5,10-methylene-5,6,7,8-tetrahydrofolate</name>
        <dbReference type="ChEBI" id="CHEBI:15636"/>
    </ligand>
</feature>
<accession>C5BMA3</accession>
<evidence type="ECO:0000255" key="1">
    <source>
        <dbReference type="HAMAP-Rule" id="MF_00008"/>
    </source>
</evidence>
<reference key="1">
    <citation type="journal article" date="2009" name="PLoS ONE">
        <title>The complete genome of Teredinibacter turnerae T7901: an intracellular endosymbiont of marine wood-boring bivalves (shipworms).</title>
        <authorList>
            <person name="Yang J.C."/>
            <person name="Madupu R."/>
            <person name="Durkin A.S."/>
            <person name="Ekborg N.A."/>
            <person name="Pedamallu C.S."/>
            <person name="Hostetler J.B."/>
            <person name="Radune D."/>
            <person name="Toms B.S."/>
            <person name="Henrissat B."/>
            <person name="Coutinho P.M."/>
            <person name="Schwarz S."/>
            <person name="Field L."/>
            <person name="Trindade-Silva A.E."/>
            <person name="Soares C.A.G."/>
            <person name="Elshahawi S."/>
            <person name="Hanora A."/>
            <person name="Schmidt E.W."/>
            <person name="Haygood M.G."/>
            <person name="Posfai J."/>
            <person name="Benner J."/>
            <person name="Madinger C."/>
            <person name="Nove J."/>
            <person name="Anton B."/>
            <person name="Chaudhary K."/>
            <person name="Foster J."/>
            <person name="Holman A."/>
            <person name="Kumar S."/>
            <person name="Lessard P.A."/>
            <person name="Luyten Y.A."/>
            <person name="Slatko B."/>
            <person name="Wood N."/>
            <person name="Wu B."/>
            <person name="Teplitski M."/>
            <person name="Mougous J.D."/>
            <person name="Ward N."/>
            <person name="Eisen J.A."/>
            <person name="Badger J.H."/>
            <person name="Distel D.L."/>
        </authorList>
    </citation>
    <scope>NUCLEOTIDE SEQUENCE [LARGE SCALE GENOMIC DNA]</scope>
    <source>
        <strain>ATCC 39867 / T7901</strain>
    </source>
</reference>
<dbReference type="EC" id="2.1.1.45" evidence="1"/>
<dbReference type="EMBL" id="CP001614">
    <property type="protein sequence ID" value="ACR13608.1"/>
    <property type="molecule type" value="Genomic_DNA"/>
</dbReference>
<dbReference type="RefSeq" id="WP_015819722.1">
    <property type="nucleotide sequence ID" value="NC_012997.1"/>
</dbReference>
<dbReference type="SMR" id="C5BMA3"/>
<dbReference type="STRING" id="377629.TERTU_0365"/>
<dbReference type="KEGG" id="ttu:TERTU_0365"/>
<dbReference type="eggNOG" id="COG0207">
    <property type="taxonomic scope" value="Bacteria"/>
</dbReference>
<dbReference type="HOGENOM" id="CLU_021669_0_0_6"/>
<dbReference type="OrthoDB" id="9774633at2"/>
<dbReference type="UniPathway" id="UPA00575"/>
<dbReference type="Proteomes" id="UP000009080">
    <property type="component" value="Chromosome"/>
</dbReference>
<dbReference type="GO" id="GO:0005829">
    <property type="term" value="C:cytosol"/>
    <property type="evidence" value="ECO:0007669"/>
    <property type="project" value="TreeGrafter"/>
</dbReference>
<dbReference type="GO" id="GO:0004799">
    <property type="term" value="F:thymidylate synthase activity"/>
    <property type="evidence" value="ECO:0007669"/>
    <property type="project" value="UniProtKB-UniRule"/>
</dbReference>
<dbReference type="GO" id="GO:0006231">
    <property type="term" value="P:dTMP biosynthetic process"/>
    <property type="evidence" value="ECO:0007669"/>
    <property type="project" value="UniProtKB-UniRule"/>
</dbReference>
<dbReference type="GO" id="GO:0006235">
    <property type="term" value="P:dTTP biosynthetic process"/>
    <property type="evidence" value="ECO:0007669"/>
    <property type="project" value="UniProtKB-UniRule"/>
</dbReference>
<dbReference type="GO" id="GO:0032259">
    <property type="term" value="P:methylation"/>
    <property type="evidence" value="ECO:0007669"/>
    <property type="project" value="UniProtKB-KW"/>
</dbReference>
<dbReference type="CDD" id="cd00351">
    <property type="entry name" value="TS_Pyrimidine_HMase"/>
    <property type="match status" value="1"/>
</dbReference>
<dbReference type="FunFam" id="3.30.572.10:FF:000013">
    <property type="entry name" value="Thymidylate synthase"/>
    <property type="match status" value="1"/>
</dbReference>
<dbReference type="Gene3D" id="3.30.572.10">
    <property type="entry name" value="Thymidylate synthase/dCMP hydroxymethylase domain"/>
    <property type="match status" value="1"/>
</dbReference>
<dbReference type="HAMAP" id="MF_00008">
    <property type="entry name" value="Thymidy_synth_bact"/>
    <property type="match status" value="1"/>
</dbReference>
<dbReference type="InterPro" id="IPR045097">
    <property type="entry name" value="Thymidate_synth/dCMP_Mease"/>
</dbReference>
<dbReference type="InterPro" id="IPR023451">
    <property type="entry name" value="Thymidate_synth/dCMP_Mease_dom"/>
</dbReference>
<dbReference type="InterPro" id="IPR036926">
    <property type="entry name" value="Thymidate_synth/dCMP_Mease_sf"/>
</dbReference>
<dbReference type="InterPro" id="IPR000398">
    <property type="entry name" value="Thymidylate_synthase"/>
</dbReference>
<dbReference type="NCBIfam" id="NF002497">
    <property type="entry name" value="PRK01827.1-3"/>
    <property type="match status" value="1"/>
</dbReference>
<dbReference type="NCBIfam" id="NF002499">
    <property type="entry name" value="PRK01827.1-5"/>
    <property type="match status" value="1"/>
</dbReference>
<dbReference type="NCBIfam" id="TIGR03284">
    <property type="entry name" value="thym_sym"/>
    <property type="match status" value="2"/>
</dbReference>
<dbReference type="PANTHER" id="PTHR11548:SF9">
    <property type="entry name" value="THYMIDYLATE SYNTHASE"/>
    <property type="match status" value="1"/>
</dbReference>
<dbReference type="PANTHER" id="PTHR11548">
    <property type="entry name" value="THYMIDYLATE SYNTHASE 1"/>
    <property type="match status" value="1"/>
</dbReference>
<dbReference type="Pfam" id="PF00303">
    <property type="entry name" value="Thymidylat_synt"/>
    <property type="match status" value="1"/>
</dbReference>
<dbReference type="PRINTS" id="PR00108">
    <property type="entry name" value="THYMDSNTHASE"/>
</dbReference>
<dbReference type="SUPFAM" id="SSF55831">
    <property type="entry name" value="Thymidylate synthase/dCMP hydroxymethylase"/>
    <property type="match status" value="1"/>
</dbReference>
<name>TYSY_TERTT</name>
<protein>
    <recommendedName>
        <fullName evidence="1">Thymidylate synthase</fullName>
        <shortName evidence="1">TS</shortName>
        <shortName evidence="1">TSase</shortName>
        <ecNumber evidence="1">2.1.1.45</ecNumber>
    </recommendedName>
</protein>
<keyword id="KW-0963">Cytoplasm</keyword>
<keyword id="KW-0489">Methyltransferase</keyword>
<keyword id="KW-0545">Nucleotide biosynthesis</keyword>
<keyword id="KW-1185">Reference proteome</keyword>
<keyword id="KW-0808">Transferase</keyword>
<organism>
    <name type="scientific">Teredinibacter turnerae (strain ATCC 39867 / T7901)</name>
    <dbReference type="NCBI Taxonomy" id="377629"/>
    <lineage>
        <taxon>Bacteria</taxon>
        <taxon>Pseudomonadati</taxon>
        <taxon>Pseudomonadota</taxon>
        <taxon>Gammaproteobacteria</taxon>
        <taxon>Cellvibrionales</taxon>
        <taxon>Cellvibrionaceae</taxon>
        <taxon>Teredinibacter</taxon>
    </lineage>
</organism>
<comment type="function">
    <text evidence="1">Catalyzes the reductive methylation of 2'-deoxyuridine-5'-monophosphate (dUMP) to 2'-deoxythymidine-5'-monophosphate (dTMP) while utilizing 5,10-methylenetetrahydrofolate (mTHF) as the methyl donor and reductant in the reaction, yielding dihydrofolate (DHF) as a by-product. This enzymatic reaction provides an intracellular de novo source of dTMP, an essential precursor for DNA biosynthesis.</text>
</comment>
<comment type="catalytic activity">
    <reaction evidence="1">
        <text>dUMP + (6R)-5,10-methylene-5,6,7,8-tetrahydrofolate = 7,8-dihydrofolate + dTMP</text>
        <dbReference type="Rhea" id="RHEA:12104"/>
        <dbReference type="ChEBI" id="CHEBI:15636"/>
        <dbReference type="ChEBI" id="CHEBI:57451"/>
        <dbReference type="ChEBI" id="CHEBI:63528"/>
        <dbReference type="ChEBI" id="CHEBI:246422"/>
        <dbReference type="EC" id="2.1.1.45"/>
    </reaction>
</comment>
<comment type="pathway">
    <text evidence="1">Pyrimidine metabolism; dTTP biosynthesis.</text>
</comment>
<comment type="subunit">
    <text evidence="1">Homodimer.</text>
</comment>
<comment type="subcellular location">
    <subcellularLocation>
        <location evidence="1">Cytoplasm</location>
    </subcellularLocation>
</comment>
<comment type="similarity">
    <text evidence="1">Belongs to the thymidylate synthase family. Bacterial-type ThyA subfamily.</text>
</comment>
<proteinExistence type="inferred from homology"/>